<geneLocation type="chloroplast"/>
<reference key="1">
    <citation type="journal article" date="2006" name="Mol. Biol. Evol.">
        <title>The chloroplast genome sequence of Chara vulgaris sheds new light into the closest green algal relatives of land plants.</title>
        <authorList>
            <person name="Turmel M."/>
            <person name="Otis C."/>
            <person name="Lemieux C."/>
        </authorList>
    </citation>
    <scope>NUCLEOTIDE SEQUENCE [LARGE SCALE GENOMIC DNA]</scope>
</reference>
<organism>
    <name type="scientific">Chara vulgaris</name>
    <name type="common">Common stonewort</name>
    <dbReference type="NCBI Taxonomy" id="55564"/>
    <lineage>
        <taxon>Eukaryota</taxon>
        <taxon>Viridiplantae</taxon>
        <taxon>Streptophyta</taxon>
        <taxon>Charophyceae</taxon>
        <taxon>Charales</taxon>
        <taxon>Characeae</taxon>
        <taxon>Chara</taxon>
    </lineage>
</organism>
<name>PSBH_CHAVU</name>
<evidence type="ECO:0000250" key="1">
    <source>
        <dbReference type="UniProtKB" id="P56780"/>
    </source>
</evidence>
<evidence type="ECO:0000255" key="2">
    <source>
        <dbReference type="HAMAP-Rule" id="MF_00752"/>
    </source>
</evidence>
<accession>Q1ACH2</accession>
<dbReference type="EMBL" id="DQ229107">
    <property type="protein sequence ID" value="ABA61962.1"/>
    <property type="molecule type" value="Genomic_DNA"/>
</dbReference>
<dbReference type="RefSeq" id="YP_635775.1">
    <property type="nucleotide sequence ID" value="NC_008097.1"/>
</dbReference>
<dbReference type="SMR" id="Q1ACH2"/>
<dbReference type="GeneID" id="4100333"/>
<dbReference type="GO" id="GO:0009535">
    <property type="term" value="C:chloroplast thylakoid membrane"/>
    <property type="evidence" value="ECO:0007669"/>
    <property type="project" value="UniProtKB-SubCell"/>
</dbReference>
<dbReference type="GO" id="GO:0009523">
    <property type="term" value="C:photosystem II"/>
    <property type="evidence" value="ECO:0007669"/>
    <property type="project" value="UniProtKB-KW"/>
</dbReference>
<dbReference type="GO" id="GO:0042301">
    <property type="term" value="F:phosphate ion binding"/>
    <property type="evidence" value="ECO:0007669"/>
    <property type="project" value="InterPro"/>
</dbReference>
<dbReference type="GO" id="GO:0015979">
    <property type="term" value="P:photosynthesis"/>
    <property type="evidence" value="ECO:0007669"/>
    <property type="project" value="UniProtKB-UniRule"/>
</dbReference>
<dbReference type="GO" id="GO:0050821">
    <property type="term" value="P:protein stabilization"/>
    <property type="evidence" value="ECO:0007669"/>
    <property type="project" value="InterPro"/>
</dbReference>
<dbReference type="Gene3D" id="1.20.5.880">
    <property type="entry name" value="Photosystem II reaction center protein H"/>
    <property type="match status" value="1"/>
</dbReference>
<dbReference type="HAMAP" id="MF_00752">
    <property type="entry name" value="PSII_PsbH"/>
    <property type="match status" value="1"/>
</dbReference>
<dbReference type="InterPro" id="IPR001056">
    <property type="entry name" value="PSII_PsbH"/>
</dbReference>
<dbReference type="InterPro" id="IPR036863">
    <property type="entry name" value="PSII_PsbH_sf"/>
</dbReference>
<dbReference type="NCBIfam" id="NF002728">
    <property type="entry name" value="PRK02624.1"/>
    <property type="match status" value="1"/>
</dbReference>
<dbReference type="PANTHER" id="PTHR34469">
    <property type="entry name" value="PHOTOSYSTEM II REACTION CENTER PROTEIN H"/>
    <property type="match status" value="1"/>
</dbReference>
<dbReference type="PANTHER" id="PTHR34469:SF4">
    <property type="entry name" value="PHOTOSYSTEM II REACTION CENTER PROTEIN H"/>
    <property type="match status" value="1"/>
</dbReference>
<dbReference type="Pfam" id="PF00737">
    <property type="entry name" value="PsbH"/>
    <property type="match status" value="1"/>
</dbReference>
<dbReference type="SUPFAM" id="SSF161025">
    <property type="entry name" value="Photosystem II 10 kDa phosphoprotein PsbH"/>
    <property type="match status" value="1"/>
</dbReference>
<feature type="initiator methionine" description="Removed" evidence="1">
    <location>
        <position position="1"/>
    </location>
</feature>
<feature type="chain" id="PRO_0000275747" description="Photosystem II reaction center protein H">
    <location>
        <begin position="2"/>
        <end position="78"/>
    </location>
</feature>
<feature type="transmembrane region" description="Helical" evidence="2">
    <location>
        <begin position="41"/>
        <end position="61"/>
    </location>
</feature>
<feature type="modified residue" description="Phosphothreonine" evidence="2">
    <location>
        <position position="3"/>
    </location>
</feature>
<protein>
    <recommendedName>
        <fullName evidence="2">Photosystem II reaction center protein H</fullName>
        <shortName evidence="2">PSII-H</shortName>
    </recommendedName>
    <alternativeName>
        <fullName evidence="2">Photosystem II 10 kDa phosphoprotein</fullName>
    </alternativeName>
</protein>
<sequence>MATQIVEDTIKSKGRRTDVGDILKPLNSEYGKVAPGWGTTVLMGIFMALFAVFLVIILEIYNASVLLDGISVSWASLV</sequence>
<proteinExistence type="inferred from homology"/>
<gene>
    <name evidence="2" type="primary">psbH</name>
</gene>
<keyword id="KW-0150">Chloroplast</keyword>
<keyword id="KW-0472">Membrane</keyword>
<keyword id="KW-0597">Phosphoprotein</keyword>
<keyword id="KW-0602">Photosynthesis</keyword>
<keyword id="KW-0604">Photosystem II</keyword>
<keyword id="KW-0934">Plastid</keyword>
<keyword id="KW-0793">Thylakoid</keyword>
<keyword id="KW-0812">Transmembrane</keyword>
<keyword id="KW-1133">Transmembrane helix</keyword>
<comment type="function">
    <text evidence="2">One of the components of the core complex of photosystem II (PSII), required for its stability and/or assembly. PSII is a light-driven water:plastoquinone oxidoreductase that uses light energy to abstract electrons from H(2)O, generating O(2) and a proton gradient subsequently used for ATP formation. It consists of a core antenna complex that captures photons, and an electron transfer chain that converts photonic excitation into a charge separation.</text>
</comment>
<comment type="subunit">
    <text evidence="2">PSII is composed of 1 copy each of membrane proteins PsbA, PsbB, PsbC, PsbD, PsbE, PsbF, PsbH, PsbI, PsbJ, PsbK, PsbL, PsbM, PsbT, PsbX, PsbY, PsbZ, Psb30/Ycf12, at least 3 peripheral proteins of the oxygen-evolving complex and a large number of cofactors. It forms dimeric complexes.</text>
</comment>
<comment type="subcellular location">
    <subcellularLocation>
        <location evidence="2">Plastid</location>
        <location evidence="2">Chloroplast thylakoid membrane</location>
        <topology evidence="2">Single-pass membrane protein</topology>
    </subcellularLocation>
</comment>
<comment type="PTM">
    <text evidence="2">Phosphorylation is a light-dependent reaction catalyzed by a membrane-bound kinase; phosphorylation occurs on Thr residue(s) in the N-terminus of the protein.</text>
</comment>
<comment type="similarity">
    <text evidence="2">Belongs to the PsbH family.</text>
</comment>